<keyword id="KW-0067">ATP-binding</keyword>
<keyword id="KW-0963">Cytoplasm</keyword>
<keyword id="KW-0418">Kinase</keyword>
<keyword id="KW-0444">Lipid biosynthesis</keyword>
<keyword id="KW-0443">Lipid metabolism</keyword>
<keyword id="KW-0460">Magnesium</keyword>
<keyword id="KW-0479">Metal-binding</keyword>
<keyword id="KW-0547">Nucleotide-binding</keyword>
<keyword id="KW-0594">Phospholipid biosynthesis</keyword>
<keyword id="KW-1208">Phospholipid metabolism</keyword>
<keyword id="KW-0808">Transferase</keyword>
<organism>
    <name type="scientific">Pseudomonas fluorescens (strain ATCC BAA-477 / NRRL B-23932 / Pf-5)</name>
    <dbReference type="NCBI Taxonomy" id="220664"/>
    <lineage>
        <taxon>Bacteria</taxon>
        <taxon>Pseudomonadati</taxon>
        <taxon>Pseudomonadota</taxon>
        <taxon>Gammaproteobacteria</taxon>
        <taxon>Pseudomonadales</taxon>
        <taxon>Pseudomonadaceae</taxon>
        <taxon>Pseudomonas</taxon>
    </lineage>
</organism>
<accession>Q4K8Y4</accession>
<dbReference type="EC" id="2.7.1.-" evidence="1"/>
<dbReference type="EMBL" id="CP000076">
    <property type="protein sequence ID" value="AAY93463.1"/>
    <property type="molecule type" value="Genomic_DNA"/>
</dbReference>
<dbReference type="SMR" id="Q4K8Y4"/>
<dbReference type="STRING" id="220664.PFL_4207"/>
<dbReference type="KEGG" id="pfl:PFL_4207"/>
<dbReference type="PATRIC" id="fig|220664.5.peg.4304"/>
<dbReference type="eggNOG" id="COG1597">
    <property type="taxonomic scope" value="Bacteria"/>
</dbReference>
<dbReference type="HOGENOM" id="CLU_045532_1_1_6"/>
<dbReference type="Proteomes" id="UP000008540">
    <property type="component" value="Chromosome"/>
</dbReference>
<dbReference type="GO" id="GO:0005737">
    <property type="term" value="C:cytoplasm"/>
    <property type="evidence" value="ECO:0007669"/>
    <property type="project" value="UniProtKB-SubCell"/>
</dbReference>
<dbReference type="GO" id="GO:0005886">
    <property type="term" value="C:plasma membrane"/>
    <property type="evidence" value="ECO:0007669"/>
    <property type="project" value="TreeGrafter"/>
</dbReference>
<dbReference type="GO" id="GO:0005524">
    <property type="term" value="F:ATP binding"/>
    <property type="evidence" value="ECO:0007669"/>
    <property type="project" value="UniProtKB-UniRule"/>
</dbReference>
<dbReference type="GO" id="GO:0001727">
    <property type="term" value="F:lipid kinase activity"/>
    <property type="evidence" value="ECO:0007669"/>
    <property type="project" value="UniProtKB-UniRule"/>
</dbReference>
<dbReference type="GO" id="GO:0000287">
    <property type="term" value="F:magnesium ion binding"/>
    <property type="evidence" value="ECO:0007669"/>
    <property type="project" value="UniProtKB-UniRule"/>
</dbReference>
<dbReference type="GO" id="GO:0008654">
    <property type="term" value="P:phospholipid biosynthetic process"/>
    <property type="evidence" value="ECO:0007669"/>
    <property type="project" value="UniProtKB-UniRule"/>
</dbReference>
<dbReference type="Gene3D" id="2.60.200.40">
    <property type="match status" value="1"/>
</dbReference>
<dbReference type="Gene3D" id="3.40.50.10330">
    <property type="entry name" value="Probable inorganic polyphosphate/atp-NAD kinase, domain 1"/>
    <property type="match status" value="1"/>
</dbReference>
<dbReference type="HAMAP" id="MF_01377">
    <property type="entry name" value="YegS"/>
    <property type="match status" value="1"/>
</dbReference>
<dbReference type="InterPro" id="IPR017438">
    <property type="entry name" value="ATP-NAD_kinase_N"/>
</dbReference>
<dbReference type="InterPro" id="IPR005218">
    <property type="entry name" value="Diacylglycerol/lipid_kinase"/>
</dbReference>
<dbReference type="InterPro" id="IPR001206">
    <property type="entry name" value="Diacylglycerol_kinase_cat_dom"/>
</dbReference>
<dbReference type="InterPro" id="IPR022433">
    <property type="entry name" value="Lip_kinase_YegS"/>
</dbReference>
<dbReference type="InterPro" id="IPR050187">
    <property type="entry name" value="Lipid_Phosphate_FormReg"/>
</dbReference>
<dbReference type="InterPro" id="IPR016064">
    <property type="entry name" value="NAD/diacylglycerol_kinase_sf"/>
</dbReference>
<dbReference type="InterPro" id="IPR045540">
    <property type="entry name" value="YegS/DAGK_C"/>
</dbReference>
<dbReference type="NCBIfam" id="TIGR03702">
    <property type="entry name" value="lip_kinase_YegS"/>
    <property type="match status" value="1"/>
</dbReference>
<dbReference type="NCBIfam" id="NF009602">
    <property type="entry name" value="PRK13054.1"/>
    <property type="match status" value="1"/>
</dbReference>
<dbReference type="NCBIfam" id="TIGR00147">
    <property type="entry name" value="YegS/Rv2252/BmrU family lipid kinase"/>
    <property type="match status" value="1"/>
</dbReference>
<dbReference type="PANTHER" id="PTHR12358:SF106">
    <property type="entry name" value="LIPID KINASE YEGS"/>
    <property type="match status" value="1"/>
</dbReference>
<dbReference type="PANTHER" id="PTHR12358">
    <property type="entry name" value="SPHINGOSINE KINASE"/>
    <property type="match status" value="1"/>
</dbReference>
<dbReference type="Pfam" id="PF00781">
    <property type="entry name" value="DAGK_cat"/>
    <property type="match status" value="1"/>
</dbReference>
<dbReference type="Pfam" id="PF19279">
    <property type="entry name" value="YegS_C"/>
    <property type="match status" value="1"/>
</dbReference>
<dbReference type="SMART" id="SM00046">
    <property type="entry name" value="DAGKc"/>
    <property type="match status" value="1"/>
</dbReference>
<dbReference type="SUPFAM" id="SSF111331">
    <property type="entry name" value="NAD kinase/diacylglycerol kinase-like"/>
    <property type="match status" value="1"/>
</dbReference>
<dbReference type="PROSITE" id="PS50146">
    <property type="entry name" value="DAGK"/>
    <property type="match status" value="1"/>
</dbReference>
<sequence>MSERKALLILHGKQALNEEVRAAVEARRAAGWDLQVRLTWEAGDAQRLVQEALAAGHTRLIAGGGDGTLRDIAEALANADAPASLVLLPLGTANDFARAAGVPLTPAAALDLLDVPARAIDLGEVGGQMFLNMATGGFGSQVTANTSEDLKKVLGGAAYLFTGLSRFAELSAAYGELQGPGFHWHGELLALGIGNGRQAGGGHELCPGALADDGLLDISILPAPQELVGTLKNLLAGGLGIDNLFVRARLPWVEIKASRGLDINLDGEPLQGDTLRFTARPGALRVHLPEDSPLLGGAR</sequence>
<reference key="1">
    <citation type="journal article" date="2005" name="Nat. Biotechnol.">
        <title>Complete genome sequence of the plant commensal Pseudomonas fluorescens Pf-5.</title>
        <authorList>
            <person name="Paulsen I.T."/>
            <person name="Press C.M."/>
            <person name="Ravel J."/>
            <person name="Kobayashi D.Y."/>
            <person name="Myers G.S.A."/>
            <person name="Mavrodi D.V."/>
            <person name="DeBoy R.T."/>
            <person name="Seshadri R."/>
            <person name="Ren Q."/>
            <person name="Madupu R."/>
            <person name="Dodson R.J."/>
            <person name="Durkin A.S."/>
            <person name="Brinkac L.M."/>
            <person name="Daugherty S.C."/>
            <person name="Sullivan S.A."/>
            <person name="Rosovitz M.J."/>
            <person name="Gwinn M.L."/>
            <person name="Zhou L."/>
            <person name="Schneider D.J."/>
            <person name="Cartinhour S.W."/>
            <person name="Nelson W.C."/>
            <person name="Weidman J."/>
            <person name="Watkins K."/>
            <person name="Tran K."/>
            <person name="Khouri H."/>
            <person name="Pierson E.A."/>
            <person name="Pierson L.S. III"/>
            <person name="Thomashow L.S."/>
            <person name="Loper J.E."/>
        </authorList>
    </citation>
    <scope>NUCLEOTIDE SEQUENCE [LARGE SCALE GENOMIC DNA]</scope>
    <source>
        <strain>ATCC BAA-477 / NRRL B-23932 / Pf-5</strain>
    </source>
</reference>
<gene>
    <name type="ordered locus">PFL_4207</name>
</gene>
<proteinExistence type="inferred from homology"/>
<comment type="function">
    <text evidence="1">Probably phosphorylates lipids; the in vivo substrate is unknown.</text>
</comment>
<comment type="cofactor">
    <cofactor evidence="1">
        <name>Mg(2+)</name>
        <dbReference type="ChEBI" id="CHEBI:18420"/>
    </cofactor>
    <cofactor evidence="1">
        <name>Ca(2+)</name>
        <dbReference type="ChEBI" id="CHEBI:29108"/>
    </cofactor>
    <text evidence="1">Binds 1 Mg(2+) ion per subunit. Ca(2+) may be able to substitute.</text>
</comment>
<comment type="subcellular location">
    <subcellularLocation>
        <location evidence="1">Cytoplasm</location>
    </subcellularLocation>
</comment>
<comment type="similarity">
    <text evidence="1">Belongs to the diacylglycerol/lipid kinase family. YegS lipid kinase subfamily.</text>
</comment>
<evidence type="ECO:0000255" key="1">
    <source>
        <dbReference type="HAMAP-Rule" id="MF_01377"/>
    </source>
</evidence>
<feature type="chain" id="PRO_0000292149" description="Probable lipid kinase YegS-like">
    <location>
        <begin position="1"/>
        <end position="299"/>
    </location>
</feature>
<feature type="domain" description="DAGKc" evidence="1">
    <location>
        <begin position="1"/>
        <end position="129"/>
    </location>
</feature>
<feature type="active site" description="Proton acceptor" evidence="1">
    <location>
        <position position="268"/>
    </location>
</feature>
<feature type="binding site" evidence="1">
    <location>
        <position position="39"/>
    </location>
    <ligand>
        <name>ATP</name>
        <dbReference type="ChEBI" id="CHEBI:30616"/>
    </ligand>
</feature>
<feature type="binding site" evidence="1">
    <location>
        <begin position="65"/>
        <end position="71"/>
    </location>
    <ligand>
        <name>ATP</name>
        <dbReference type="ChEBI" id="CHEBI:30616"/>
    </ligand>
</feature>
<feature type="binding site" evidence="1">
    <location>
        <position position="92"/>
    </location>
    <ligand>
        <name>ATP</name>
        <dbReference type="ChEBI" id="CHEBI:30616"/>
    </ligand>
</feature>
<feature type="binding site" evidence="1">
    <location>
        <position position="210"/>
    </location>
    <ligand>
        <name>Mg(2+)</name>
        <dbReference type="ChEBI" id="CHEBI:18420"/>
    </ligand>
</feature>
<feature type="binding site" evidence="1">
    <location>
        <position position="213"/>
    </location>
    <ligand>
        <name>Mg(2+)</name>
        <dbReference type="ChEBI" id="CHEBI:18420"/>
    </ligand>
</feature>
<feature type="binding site" evidence="1">
    <location>
        <position position="215"/>
    </location>
    <ligand>
        <name>Mg(2+)</name>
        <dbReference type="ChEBI" id="CHEBI:18420"/>
    </ligand>
</feature>
<protein>
    <recommendedName>
        <fullName evidence="1">Probable lipid kinase YegS-like</fullName>
        <ecNumber evidence="1">2.7.1.-</ecNumber>
    </recommendedName>
</protein>
<name>YEGS_PSEF5</name>